<sequence>MVTVDEVRKAQRAEGPATVLAIGTATPPNCIDQSTYPDYYFRITNSEHKTELKEKFQRMCDKSMIKKRYMYLTEEILKENPSMCEYMAPSLDARQDMVVVEIPKLGKEAATKAIKEWGQPKSKITHLVFCTTSGVDMPGADYQLTKLLGLRPSVKRLMMYQQGCFAGGTVLRLAKDLAENNRGARVLVVCSEIXAVTFRGPSDTHLDSLVGQALFGDGAAAIIVGADPLPKIERPLFELVSAAQTILPDSDGAIDGHLREVGLTFHLLKDVPGLISKNIEKSLNEAFKPLDITDWNSLFWIAHPGGPAILDQVETKLGLKPEKLEATRHILSEYGNMSSACVLFILDEVRRKSATNGLKTTGEGLEWGVLFGFGPGLTVETVVLHSVGVTA</sequence>
<proteinExistence type="evidence at protein level"/>
<keyword id="KW-0012">Acyltransferase</keyword>
<keyword id="KW-0808">Transferase</keyword>
<gene>
    <name type="primary">PKS5</name>
</gene>
<feature type="chain" id="PRO_0000424290" description="Polyketide synthase 5">
    <location>
        <begin position="1"/>
        <end position="391"/>
    </location>
</feature>
<feature type="active site" evidence="2">
    <location>
        <position position="164"/>
    </location>
</feature>
<reference key="1">
    <citation type="journal article" date="2008" name="Arch. Biochem. Biophys.">
        <title>Molecular and biochemical characterization of benzalacetone synthase and chalcone synthase genes and their proteins from raspberry (Rubus idaeus L.).</title>
        <authorList>
            <person name="Zheng D."/>
            <person name="Hrazdina G."/>
        </authorList>
    </citation>
    <scope>NUCLEOTIDE SEQUENCE [GENOMIC DNA]</scope>
    <scope>FUNCTION</scope>
    <scope>CATALYTIC ACTIVITY</scope>
    <scope>TISSUE SPECIFICITY</scope>
    <scope>DEVELOPMENTAL STAGE</scope>
    <source>
        <strain>cv. Royalty</strain>
        <tissue>Leaf</tissue>
    </source>
</reference>
<name>PKS5_RUBID</name>
<organism>
    <name type="scientific">Rubus idaeus</name>
    <name type="common">Raspberry</name>
    <dbReference type="NCBI Taxonomy" id="32247"/>
    <lineage>
        <taxon>Eukaryota</taxon>
        <taxon>Viridiplantae</taxon>
        <taxon>Streptophyta</taxon>
        <taxon>Embryophyta</taxon>
        <taxon>Tracheophyta</taxon>
        <taxon>Spermatophyta</taxon>
        <taxon>Magnoliopsida</taxon>
        <taxon>eudicotyledons</taxon>
        <taxon>Gunneridae</taxon>
        <taxon>Pentapetalae</taxon>
        <taxon>rosids</taxon>
        <taxon>fabids</taxon>
        <taxon>Rosales</taxon>
        <taxon>Rosaceae</taxon>
        <taxon>Rosoideae</taxon>
        <taxon>Rosoideae incertae sedis</taxon>
        <taxon>Rubus</taxon>
    </lineage>
</organism>
<evidence type="ECO:0000250" key="1"/>
<evidence type="ECO:0000255" key="2">
    <source>
        <dbReference type="PROSITE-ProRule" id="PRU10023"/>
    </source>
</evidence>
<evidence type="ECO:0000269" key="3">
    <source>
    </source>
</evidence>
<evidence type="ECO:0000305" key="4"/>
<dbReference type="EC" id="2.3.1.74"/>
<dbReference type="EMBL" id="EF694718">
    <property type="protein sequence ID" value="ABV54603.1"/>
    <property type="molecule type" value="Genomic_DNA"/>
</dbReference>
<dbReference type="BRENDA" id="2.3.1.74">
    <property type="organism ID" value="5472"/>
</dbReference>
<dbReference type="UniPathway" id="UPA00154"/>
<dbReference type="GO" id="GO:0016210">
    <property type="term" value="F:naringenin-chalcone synthase activity"/>
    <property type="evidence" value="ECO:0007669"/>
    <property type="project" value="UniProtKB-EC"/>
</dbReference>
<dbReference type="GO" id="GO:0042803">
    <property type="term" value="F:protein homodimerization activity"/>
    <property type="evidence" value="ECO:0000250"/>
    <property type="project" value="UniProtKB"/>
</dbReference>
<dbReference type="GO" id="GO:0009813">
    <property type="term" value="P:flavonoid biosynthetic process"/>
    <property type="evidence" value="ECO:0007669"/>
    <property type="project" value="UniProtKB-UniPathway"/>
</dbReference>
<dbReference type="GO" id="GO:0030639">
    <property type="term" value="P:polyketide biosynthetic process"/>
    <property type="evidence" value="ECO:0007669"/>
    <property type="project" value="TreeGrafter"/>
</dbReference>
<dbReference type="CDD" id="cd00831">
    <property type="entry name" value="CHS_like"/>
    <property type="match status" value="1"/>
</dbReference>
<dbReference type="FunFam" id="3.40.47.10:FF:000014">
    <property type="entry name" value="Chalcone synthase 1"/>
    <property type="match status" value="1"/>
</dbReference>
<dbReference type="FunFam" id="3.40.47.10:FF:000025">
    <property type="entry name" value="Chalcone synthase 2"/>
    <property type="match status" value="1"/>
</dbReference>
<dbReference type="Gene3D" id="3.40.47.10">
    <property type="match status" value="2"/>
</dbReference>
<dbReference type="InterPro" id="IPR012328">
    <property type="entry name" value="Chalcone/stilbene_synt_C"/>
</dbReference>
<dbReference type="InterPro" id="IPR001099">
    <property type="entry name" value="Chalcone/stilbene_synt_N"/>
</dbReference>
<dbReference type="InterPro" id="IPR018088">
    <property type="entry name" value="Chalcone/stilbene_synthase_AS"/>
</dbReference>
<dbReference type="InterPro" id="IPR011141">
    <property type="entry name" value="Polyketide_synthase_type-III"/>
</dbReference>
<dbReference type="InterPro" id="IPR016039">
    <property type="entry name" value="Thiolase-like"/>
</dbReference>
<dbReference type="PANTHER" id="PTHR11877:SF80">
    <property type="entry name" value="CHALCONE SYNTHASE 1"/>
    <property type="match status" value="1"/>
</dbReference>
<dbReference type="PANTHER" id="PTHR11877">
    <property type="entry name" value="HYDROXYMETHYLGLUTARYL-COA SYNTHASE"/>
    <property type="match status" value="1"/>
</dbReference>
<dbReference type="Pfam" id="PF02797">
    <property type="entry name" value="Chal_sti_synt_C"/>
    <property type="match status" value="1"/>
</dbReference>
<dbReference type="Pfam" id="PF00195">
    <property type="entry name" value="Chal_sti_synt_N"/>
    <property type="match status" value="1"/>
</dbReference>
<dbReference type="PIRSF" id="PIRSF000451">
    <property type="entry name" value="PKS_III"/>
    <property type="match status" value="1"/>
</dbReference>
<dbReference type="SUPFAM" id="SSF53901">
    <property type="entry name" value="Thiolase-like"/>
    <property type="match status" value="2"/>
</dbReference>
<dbReference type="PROSITE" id="PS00441">
    <property type="entry name" value="CHALCONE_SYNTH"/>
    <property type="match status" value="1"/>
</dbReference>
<protein>
    <recommendedName>
        <fullName>Polyketide synthase 5</fullName>
        <shortName>RiPKS5</shortName>
        <ecNumber>2.3.1.74</ecNumber>
    </recommendedName>
    <alternativeName>
        <fullName>Naringenin-chalcone synthase PKS5</fullName>
    </alternativeName>
</protein>
<comment type="function">
    <text evidence="3">Polyketide synthase producing naringenin chalcone. Can use p-coumaryl-CoA as substrate.</text>
</comment>
<comment type="catalytic activity">
    <reaction evidence="2 3">
        <text>(E)-4-coumaroyl-CoA + 3 malonyl-CoA + 3 H(+) = 2',4,4',6'-tetrahydroxychalcone + 3 CO2 + 4 CoA</text>
        <dbReference type="Rhea" id="RHEA:11128"/>
        <dbReference type="ChEBI" id="CHEBI:15378"/>
        <dbReference type="ChEBI" id="CHEBI:15413"/>
        <dbReference type="ChEBI" id="CHEBI:16526"/>
        <dbReference type="ChEBI" id="CHEBI:57287"/>
        <dbReference type="ChEBI" id="CHEBI:57384"/>
        <dbReference type="ChEBI" id="CHEBI:85008"/>
        <dbReference type="EC" id="2.3.1.74"/>
    </reaction>
</comment>
<comment type="pathway">
    <text>Secondary metabolite biosynthesis; flavonoid biosynthesis.</text>
</comment>
<comment type="subunit">
    <text evidence="1">Homodimer.</text>
</comment>
<comment type="tissue specificity">
    <text evidence="3">Expressed in fruits.</text>
</comment>
<comment type="developmental stage">
    <text evidence="3">Accumulates in fruits when berries are red and full size.</text>
</comment>
<comment type="similarity">
    <text evidence="4">Belongs to the thiolase-like superfamily. Chalcone/stilbene synthases family.</text>
</comment>
<accession>B0LDU6</accession>